<accession>Q9U720</accession>
<accession>Q55D75</accession>
<proteinExistence type="evidence at protein level"/>
<reference key="1">
    <citation type="journal article" date="2000" name="Proc. Natl. Acad. Sci. U.S.A.">
        <title>The cellulose synthase gene of Dictyostelium.</title>
        <authorList>
            <person name="Blanton R.L."/>
            <person name="Fuller D."/>
            <person name="Iranfar N."/>
            <person name="Grimson M.J."/>
            <person name="Loomis W.F."/>
        </authorList>
    </citation>
    <scope>NUCLEOTIDE SEQUENCE [MRNA]</scope>
    <scope>FUNCTION</scope>
    <scope>CATALYTIC ACTIVITY</scope>
    <scope>PATHWAY</scope>
    <scope>DEVELOPMENTAL STAGE</scope>
    <source>
        <strain>AX4</strain>
    </source>
</reference>
<reference key="2">
    <citation type="journal article" date="2005" name="Nature">
        <title>The genome of the social amoeba Dictyostelium discoideum.</title>
        <authorList>
            <person name="Eichinger L."/>
            <person name="Pachebat J.A."/>
            <person name="Gloeckner G."/>
            <person name="Rajandream M.A."/>
            <person name="Sucgang R."/>
            <person name="Berriman M."/>
            <person name="Song J."/>
            <person name="Olsen R."/>
            <person name="Szafranski K."/>
            <person name="Xu Q."/>
            <person name="Tunggal B."/>
            <person name="Kummerfeld S."/>
            <person name="Madera M."/>
            <person name="Konfortov B.A."/>
            <person name="Rivero F."/>
            <person name="Bankier A.T."/>
            <person name="Lehmann R."/>
            <person name="Hamlin N."/>
            <person name="Davies R."/>
            <person name="Gaudet P."/>
            <person name="Fey P."/>
            <person name="Pilcher K."/>
            <person name="Chen G."/>
            <person name="Saunders D."/>
            <person name="Sodergren E.J."/>
            <person name="Davis P."/>
            <person name="Kerhornou A."/>
            <person name="Nie X."/>
            <person name="Hall N."/>
            <person name="Anjard C."/>
            <person name="Hemphill L."/>
            <person name="Bason N."/>
            <person name="Farbrother P."/>
            <person name="Desany B."/>
            <person name="Just E."/>
            <person name="Morio T."/>
            <person name="Rost R."/>
            <person name="Churcher C.M."/>
            <person name="Cooper J."/>
            <person name="Haydock S."/>
            <person name="van Driessche N."/>
            <person name="Cronin A."/>
            <person name="Goodhead I."/>
            <person name="Muzny D.M."/>
            <person name="Mourier T."/>
            <person name="Pain A."/>
            <person name="Lu M."/>
            <person name="Harper D."/>
            <person name="Lindsay R."/>
            <person name="Hauser H."/>
            <person name="James K.D."/>
            <person name="Quiles M."/>
            <person name="Madan Babu M."/>
            <person name="Saito T."/>
            <person name="Buchrieser C."/>
            <person name="Wardroper A."/>
            <person name="Felder M."/>
            <person name="Thangavelu M."/>
            <person name="Johnson D."/>
            <person name="Knights A."/>
            <person name="Loulseged H."/>
            <person name="Mungall K.L."/>
            <person name="Oliver K."/>
            <person name="Price C."/>
            <person name="Quail M.A."/>
            <person name="Urushihara H."/>
            <person name="Hernandez J."/>
            <person name="Rabbinowitsch E."/>
            <person name="Steffen D."/>
            <person name="Sanders M."/>
            <person name="Ma J."/>
            <person name="Kohara Y."/>
            <person name="Sharp S."/>
            <person name="Simmonds M.N."/>
            <person name="Spiegler S."/>
            <person name="Tivey A."/>
            <person name="Sugano S."/>
            <person name="White B."/>
            <person name="Walker D."/>
            <person name="Woodward J.R."/>
            <person name="Winckler T."/>
            <person name="Tanaka Y."/>
            <person name="Shaulsky G."/>
            <person name="Schleicher M."/>
            <person name="Weinstock G.M."/>
            <person name="Rosenthal A."/>
            <person name="Cox E.C."/>
            <person name="Chisholm R.L."/>
            <person name="Gibbs R.A."/>
            <person name="Loomis W.F."/>
            <person name="Platzer M."/>
            <person name="Kay R.R."/>
            <person name="Williams J.G."/>
            <person name="Dear P.H."/>
            <person name="Noegel A.A."/>
            <person name="Barrell B.G."/>
            <person name="Kuspa A."/>
        </authorList>
    </citation>
    <scope>NUCLEOTIDE SEQUENCE [LARGE SCALE GENOMIC DNA]</scope>
    <source>
        <strain>AX4</strain>
    </source>
</reference>
<protein>
    <recommendedName>
        <fullName>Cellulose synthase catalytic subunit A [UDP-forming]</fullName>
        <shortName evidence="5">DcsA</shortName>
        <ecNumber evidence="4">2.4.1.12</ecNumber>
    </recommendedName>
</protein>
<keyword id="KW-0135">Cellulose biosynthesis</keyword>
<keyword id="KW-0217">Developmental protein</keyword>
<keyword id="KW-0328">Glycosyltransferase</keyword>
<keyword id="KW-0472">Membrane</keyword>
<keyword id="KW-1185">Reference proteome</keyword>
<keyword id="KW-0808">Transferase</keyword>
<keyword id="KW-0812">Transmembrane</keyword>
<keyword id="KW-1133">Transmembrane helix</keyword>
<evidence type="ECO:0000250" key="1"/>
<evidence type="ECO:0000255" key="2"/>
<evidence type="ECO:0000256" key="3">
    <source>
        <dbReference type="SAM" id="MobiDB-lite"/>
    </source>
</evidence>
<evidence type="ECO:0000269" key="4">
    <source>
    </source>
</evidence>
<evidence type="ECO:0000303" key="5">
    <source>
    </source>
</evidence>
<evidence type="ECO:0000305" key="6"/>
<evidence type="ECO:0000305" key="7">
    <source>
    </source>
</evidence>
<name>DCSA_DICDI</name>
<organism>
    <name type="scientific">Dictyostelium discoideum</name>
    <name type="common">Social amoeba</name>
    <dbReference type="NCBI Taxonomy" id="44689"/>
    <lineage>
        <taxon>Eukaryota</taxon>
        <taxon>Amoebozoa</taxon>
        <taxon>Evosea</taxon>
        <taxon>Eumycetozoa</taxon>
        <taxon>Dictyostelia</taxon>
        <taxon>Dictyosteliales</taxon>
        <taxon>Dictyosteliaceae</taxon>
        <taxon>Dictyostelium</taxon>
    </lineage>
</organism>
<dbReference type="EC" id="2.4.1.12" evidence="4"/>
<dbReference type="EMBL" id="AF163835">
    <property type="protein sequence ID" value="AAF00200.1"/>
    <property type="molecule type" value="mRNA"/>
</dbReference>
<dbReference type="EMBL" id="AAFI02000005">
    <property type="protein sequence ID" value="EAL71912.1"/>
    <property type="molecule type" value="Genomic_DNA"/>
</dbReference>
<dbReference type="RefSeq" id="XP_646256.1">
    <property type="nucleotide sequence ID" value="XM_641164.1"/>
</dbReference>
<dbReference type="FunCoup" id="Q9U720">
    <property type="interactions" value="1"/>
</dbReference>
<dbReference type="STRING" id="44689.Q9U720"/>
<dbReference type="CAZy" id="GT2">
    <property type="family name" value="Glycosyltransferase Family 2"/>
</dbReference>
<dbReference type="PaxDb" id="44689-DDB0191159"/>
<dbReference type="EnsemblProtists" id="EAL71912">
    <property type="protein sequence ID" value="EAL71912"/>
    <property type="gene ID" value="DDB_G0269124"/>
</dbReference>
<dbReference type="GeneID" id="8617212"/>
<dbReference type="KEGG" id="ddi:DDB_G0269124"/>
<dbReference type="dictyBase" id="DDB_G0269124">
    <property type="gene designation" value="dcsA"/>
</dbReference>
<dbReference type="VEuPathDB" id="AmoebaDB:DDB_G0269124"/>
<dbReference type="eggNOG" id="ENOG502QQSH">
    <property type="taxonomic scope" value="Eukaryota"/>
</dbReference>
<dbReference type="HOGENOM" id="CLU_289588_0_0_1"/>
<dbReference type="InParanoid" id="Q9U720"/>
<dbReference type="OMA" id="SYHAHNI"/>
<dbReference type="UniPathway" id="UPA00838"/>
<dbReference type="PRO" id="PR:Q9U720"/>
<dbReference type="Proteomes" id="UP000002195">
    <property type="component" value="Chromosome 1"/>
</dbReference>
<dbReference type="GO" id="GO:0045179">
    <property type="term" value="C:apical cortex"/>
    <property type="evidence" value="ECO:0000314"/>
    <property type="project" value="dictyBase"/>
</dbReference>
<dbReference type="GO" id="GO:0005829">
    <property type="term" value="C:cytosol"/>
    <property type="evidence" value="ECO:0000314"/>
    <property type="project" value="dictyBase"/>
</dbReference>
<dbReference type="GO" id="GO:0016020">
    <property type="term" value="C:membrane"/>
    <property type="evidence" value="ECO:0000314"/>
    <property type="project" value="dictyBase"/>
</dbReference>
<dbReference type="GO" id="GO:0005739">
    <property type="term" value="C:mitochondrion"/>
    <property type="evidence" value="ECO:0000314"/>
    <property type="project" value="dictyBase"/>
</dbReference>
<dbReference type="GO" id="GO:0016760">
    <property type="term" value="F:cellulose synthase (UDP-forming) activity"/>
    <property type="evidence" value="ECO:0000314"/>
    <property type="project" value="dictyBase"/>
</dbReference>
<dbReference type="GO" id="GO:0030244">
    <property type="term" value="P:cellulose biosynthetic process"/>
    <property type="evidence" value="ECO:0000314"/>
    <property type="project" value="dictyBase"/>
</dbReference>
<dbReference type="GO" id="GO:0031150">
    <property type="term" value="P:sorocarp stalk development"/>
    <property type="evidence" value="ECO:0000315"/>
    <property type="project" value="dictyBase"/>
</dbReference>
<dbReference type="GO" id="GO:0042244">
    <property type="term" value="P:spore wall assembly"/>
    <property type="evidence" value="ECO:0000315"/>
    <property type="project" value="dictyBase"/>
</dbReference>
<dbReference type="Gene3D" id="3.90.550.10">
    <property type="entry name" value="Spore Coat Polysaccharide Biosynthesis Protein SpsA, Chain A"/>
    <property type="match status" value="2"/>
</dbReference>
<dbReference type="InterPro" id="IPR001173">
    <property type="entry name" value="Glyco_trans_2-like"/>
</dbReference>
<dbReference type="InterPro" id="IPR050321">
    <property type="entry name" value="Glycosyltr_2/OpgH_subfam"/>
</dbReference>
<dbReference type="InterPro" id="IPR029044">
    <property type="entry name" value="Nucleotide-diphossugar_trans"/>
</dbReference>
<dbReference type="PANTHER" id="PTHR43867">
    <property type="entry name" value="CELLULOSE SYNTHASE CATALYTIC SUBUNIT A [UDP-FORMING]"/>
    <property type="match status" value="1"/>
</dbReference>
<dbReference type="PANTHER" id="PTHR43867:SF2">
    <property type="entry name" value="CELLULOSE SYNTHASE CATALYTIC SUBUNIT A [UDP-FORMING]"/>
    <property type="match status" value="1"/>
</dbReference>
<dbReference type="Pfam" id="PF13632">
    <property type="entry name" value="Glyco_trans_2_3"/>
    <property type="match status" value="1"/>
</dbReference>
<dbReference type="SUPFAM" id="SSF53448">
    <property type="entry name" value="Nucleotide-diphospho-sugar transferases"/>
    <property type="match status" value="1"/>
</dbReference>
<gene>
    <name type="primary">dcsA</name>
    <name type="ORF">DDB_G0269124</name>
</gene>
<feature type="chain" id="PRO_0000327825" description="Cellulose synthase catalytic subunit A [UDP-forming]">
    <location>
        <begin position="1"/>
        <end position="1059"/>
    </location>
</feature>
<feature type="transmembrane region" description="Helical" evidence="2">
    <location>
        <begin position="246"/>
        <end position="266"/>
    </location>
</feature>
<feature type="transmembrane region" description="Helical" evidence="2">
    <location>
        <begin position="280"/>
        <end position="300"/>
    </location>
</feature>
<feature type="transmembrane region" description="Helical" evidence="2">
    <location>
        <begin position="306"/>
        <end position="323"/>
    </location>
</feature>
<feature type="transmembrane region" description="Helical" evidence="2">
    <location>
        <begin position="790"/>
        <end position="810"/>
    </location>
</feature>
<feature type="transmembrane region" description="Helical" evidence="2">
    <location>
        <begin position="813"/>
        <end position="833"/>
    </location>
</feature>
<feature type="transmembrane region" description="Helical" evidence="2">
    <location>
        <begin position="963"/>
        <end position="983"/>
    </location>
</feature>
<feature type="transmembrane region" description="Helical" evidence="2">
    <location>
        <begin position="993"/>
        <end position="1013"/>
    </location>
</feature>
<feature type="transmembrane region" description="Helical" evidence="2">
    <location>
        <begin position="1035"/>
        <end position="1055"/>
    </location>
</feature>
<feature type="region of interest" description="Disordered" evidence="3">
    <location>
        <begin position="1"/>
        <end position="159"/>
    </location>
</feature>
<feature type="region of interest" description="Disordered" evidence="3">
    <location>
        <begin position="174"/>
        <end position="220"/>
    </location>
</feature>
<feature type="region of interest" description="Catalytic subdomain A" evidence="1">
    <location>
        <begin position="328"/>
        <end position="628"/>
    </location>
</feature>
<feature type="region of interest" description="Catalytic subdomain B" evidence="1">
    <location>
        <begin position="701"/>
        <end position="761"/>
    </location>
</feature>
<feature type="region of interest" description="Disordered" evidence="3">
    <location>
        <begin position="933"/>
        <end position="953"/>
    </location>
</feature>
<feature type="compositionally biased region" description="Low complexity" evidence="3">
    <location>
        <begin position="15"/>
        <end position="36"/>
    </location>
</feature>
<feature type="compositionally biased region" description="Polar residues" evidence="3">
    <location>
        <begin position="40"/>
        <end position="57"/>
    </location>
</feature>
<feature type="compositionally biased region" description="Polar residues" evidence="3">
    <location>
        <begin position="142"/>
        <end position="154"/>
    </location>
</feature>
<feature type="compositionally biased region" description="Low complexity" evidence="3">
    <location>
        <begin position="181"/>
        <end position="194"/>
    </location>
</feature>
<feature type="compositionally biased region" description="Basic residues" evidence="3">
    <location>
        <begin position="204"/>
        <end position="219"/>
    </location>
</feature>
<feature type="compositionally biased region" description="Basic and acidic residues" evidence="3">
    <location>
        <begin position="939"/>
        <end position="953"/>
    </location>
</feature>
<feature type="active site" evidence="2">
    <location>
        <position position="370"/>
    </location>
</feature>
<feature type="active site" evidence="2">
    <location>
        <position position="717"/>
    </location>
</feature>
<feature type="binding site" evidence="2">
    <location>
        <position position="624"/>
    </location>
    <ligand>
        <name>substrate</name>
    </ligand>
</feature>
<feature type="binding site" evidence="2">
    <location>
        <position position="626"/>
    </location>
    <ligand>
        <name>substrate</name>
    </ligand>
</feature>
<sequence>MDRNEGGDFPINTPNNINSSGGSYNNSMNNSSNNIGRDIGNNQSSRNLKPKPSQSNLKWIARDLKKKSVRKDSERKLKSSGVLKKKNTVMDFGEDDGGSGDDGNITEGLPISEGMDDLPSSSNSRGGSGNDEQKKQFPKEMNSPSSEYGTTSGGQRFDTLVDPDISLAEMEEKMRQHKVYQEQQQQQQQQQQQQKQKDKELSSQKKKPSSMQLSKKKHVAKEDSETLETIIGEEKKEVVFEVKPYFSHAILQATMAVFLIWNIFYFAYRAGWTMNRTDYITFSYSILFIIVEFISFLGSALHLNNFTNPCTFVLVVTLEQILAKRRKKHPTVMMYVCTYKEPPSIVSRTFRTAISMDYPSENLWIGLLDDSVNYRESRGWAHLQSVEKNFLYVLLQKAVYSVHNIRPPVTSQHEDPHGILNETSSKIESSTKEVIEAEVQWFIEYFLLNSWFGVGQEIPRDADDAERALIAKLRDDNFSPYRTFTKSESEKISNFTIDSLQSLWHGSAFFRPLIRSILLKKDYVRNFVSELNNQHRLRFLNTEALAMAQYQVLMMGRQELPWDEISSGNVRIDFDTCDGPIVSPKCTYLRRRKPPIPHNKAGNINNALFNESTKADYEFLGLLDADQQPHPDFLKRVLPYFYSDEGQDLAFVQTPQFFSNIYPVDDPLGHRNMEFYGPVMEGRSANNACPFVGTNAIFRRQPLYDIGGIMYNSVTEDMYTGMKLQVSGYKSWYHNEVLVVGTAPVDLKETLEQRKRWAQGAVEIFSLTPWGYIRGKLGWRKMLYNLDSCIYPFLSPTAFFYGASPLIMSIWTVPIVVKDPIIFILVGMIPVMVLPRVIQYMILRAKRPYEAGKSGPSLWVEATDLWRAEQTFFGFAGTYISSWREGSASIVKLLKARKISRHKLAMWNWKRDFVKKPVVCEVFRQTKLVNENDNAQESSGKHKAEQSFRTSNKESDTIKNSRLFLPNIILFVVNILAMMSAVLRFNCFQNDMWLLVVVAGFSFSTLWHLWSFIPMALRQSEKQWPYASSYHAHNIVLFLVLGFLVLLFVDVKVCIPRVG</sequence>
<comment type="function">
    <text evidence="4">Catalytic subunit of cellulose synthase. It incorporates glucose from uridine 5'-diphosphate glucose (UDP-alpha-D-glucose) to cellulose (a (1-&gt;4)-beta-D-glucan), which is produced as an extracellular component for mechanical and chemical protection at the onset of the stalk formation, when the cells exhibit multicellular behavior during culmination.</text>
</comment>
<comment type="catalytic activity">
    <reaction evidence="4">
        <text>[(1-&gt;4)-beta-D-glucosyl](n) + UDP-alpha-D-glucose = [(1-&gt;4)-beta-D-glucosyl](n+1) + UDP + H(+)</text>
        <dbReference type="Rhea" id="RHEA:19929"/>
        <dbReference type="Rhea" id="RHEA-COMP:10033"/>
        <dbReference type="Rhea" id="RHEA-COMP:10034"/>
        <dbReference type="ChEBI" id="CHEBI:15378"/>
        <dbReference type="ChEBI" id="CHEBI:18246"/>
        <dbReference type="ChEBI" id="CHEBI:58223"/>
        <dbReference type="ChEBI" id="CHEBI:58885"/>
        <dbReference type="EC" id="2.4.1.12"/>
    </reaction>
    <physiologicalReaction direction="left-to-right" evidence="4">
        <dbReference type="Rhea" id="RHEA:19930"/>
    </physiologicalReaction>
</comment>
<comment type="cofactor">
    <cofactor evidence="1">
        <name>Mg(2+)</name>
        <dbReference type="ChEBI" id="CHEBI:18420"/>
    </cofactor>
</comment>
<comment type="pathway">
    <text evidence="7">Glycan metabolism; amoeba cellulose biosynthesis.</text>
</comment>
<comment type="subcellular location">
    <subcellularLocation>
        <location evidence="6">Membrane</location>
        <topology evidence="6">Multi-pass membrane protein</topology>
    </subcellularLocation>
</comment>
<comment type="developmental stage">
    <text evidence="4">Progressively accumulates during culmination, especially at the onset of the stalk formation. Present in fruiting body (at protein level).</text>
</comment>
<comment type="domain">
    <text>There are two conserved domains in the globular part of the protein: the N-terminal domain (domain A) contains the conserved DXD motif and is possibly involved in catalysis and substrate binding. The C-terminal domain (domain B) contains the QXXRW motif and is present only in processive glycosyl transferases. It could be involved in the processivity function of the enzyme, possibly required for holding the growing glycan chain in the active site.</text>
</comment>
<comment type="miscellaneous">
    <text>Amoebae missing dcsA exhibit snowmen-shaped fruiting bodies.</text>
</comment>
<comment type="similarity">
    <text evidence="6">Belongs to the glycosyltransferase 2 family.</text>
</comment>